<evidence type="ECO:0000250" key="1"/>
<evidence type="ECO:0000250" key="2">
    <source>
        <dbReference type="UniProtKB" id="P26231"/>
    </source>
</evidence>
<evidence type="ECO:0000250" key="3">
    <source>
        <dbReference type="UniProtKB" id="P35221"/>
    </source>
</evidence>
<evidence type="ECO:0000250" key="4">
    <source>
        <dbReference type="UniProtKB" id="Q9PVF8"/>
    </source>
</evidence>
<evidence type="ECO:0000256" key="5">
    <source>
        <dbReference type="SAM" id="MobiDB-lite"/>
    </source>
</evidence>
<evidence type="ECO:0000305" key="6"/>
<keyword id="KW-0007">Acetylation</keyword>
<keyword id="KW-0130">Cell adhesion</keyword>
<keyword id="KW-0965">Cell junction</keyword>
<keyword id="KW-1003">Cell membrane</keyword>
<keyword id="KW-0963">Cytoplasm</keyword>
<keyword id="KW-0206">Cytoskeleton</keyword>
<keyword id="KW-1017">Isopeptide bond</keyword>
<keyword id="KW-0472">Membrane</keyword>
<keyword id="KW-0539">Nucleus</keyword>
<keyword id="KW-0597">Phosphoprotein</keyword>
<keyword id="KW-1185">Reference proteome</keyword>
<keyword id="KW-0832">Ubl conjugation</keyword>
<gene>
    <name evidence="3" type="primary">CTNNA1</name>
</gene>
<protein>
    <recommendedName>
        <fullName evidence="3">Catenin alpha-1</fullName>
    </recommendedName>
</protein>
<reference key="1">
    <citation type="journal article" date="2005" name="J. Biol. Chem.">
        <title>Regulation of beta-catenin signaling and maintenance of chondrocyte differentiation by ubiquitin-independent proteasomal degradation of alpha-catenin.</title>
        <authorList>
            <person name="Hwang S.-G."/>
            <person name="Yu S.-S."/>
            <person name="Ryu J.-H."/>
            <person name="Jeon H.-B."/>
            <person name="Yoo Y.-J."/>
            <person name="Eom S.-H."/>
            <person name="Chun J.-S."/>
        </authorList>
    </citation>
    <scope>NUCLEOTIDE SEQUENCE [GENOMIC DNA]</scope>
    <source>
        <tissue>Articular cartilage</tissue>
    </source>
</reference>
<proteinExistence type="inferred from homology"/>
<feature type="initiator methionine" description="Removed" evidence="3">
    <location>
        <position position="1"/>
    </location>
</feature>
<feature type="chain" id="PRO_0000248838" description="Catenin alpha-1">
    <location>
        <begin position="2"/>
        <end position="907"/>
    </location>
</feature>
<feature type="region of interest" description="Involved in homodimerization" evidence="1">
    <location>
        <begin position="2"/>
        <end position="228"/>
    </location>
</feature>
<feature type="region of interest" description="Interaction with JUP and CTNNB1" evidence="1">
    <location>
        <begin position="97"/>
        <end position="148"/>
    </location>
</feature>
<feature type="region of interest" description="Interaction with alpha-actinin" evidence="1">
    <location>
        <begin position="326"/>
        <end position="395"/>
    </location>
</feature>
<feature type="region of interest" description="Disordered" evidence="5">
    <location>
        <begin position="865"/>
        <end position="895"/>
    </location>
</feature>
<feature type="compositionally biased region" description="Basic and acidic residues" evidence="5">
    <location>
        <begin position="865"/>
        <end position="881"/>
    </location>
</feature>
<feature type="compositionally biased region" description="Basic residues" evidence="5">
    <location>
        <begin position="882"/>
        <end position="892"/>
    </location>
</feature>
<feature type="modified residue" description="N-acetylthreonine" evidence="3">
    <location>
        <position position="2"/>
    </location>
</feature>
<feature type="modified residue" description="Phosphoserine" evidence="3">
    <location>
        <position position="264"/>
    </location>
</feature>
<feature type="modified residue" description="Phosphoserine" evidence="3">
    <location>
        <position position="268"/>
    </location>
</feature>
<feature type="modified residue" description="Phosphoserine" evidence="3">
    <location>
        <position position="296"/>
    </location>
</feature>
<feature type="modified residue" description="Phosphoserine" evidence="3">
    <location>
        <position position="298"/>
    </location>
</feature>
<feature type="modified residue" description="Phosphothreonine" evidence="3">
    <location>
        <position position="635"/>
    </location>
</feature>
<feature type="modified residue" description="Phosphoserine" evidence="3">
    <location>
        <position position="642"/>
    </location>
</feature>
<feature type="modified residue" description="Phosphothreonine" evidence="3">
    <location>
        <position position="646"/>
    </location>
</feature>
<feature type="modified residue" description="Phosphoserine" evidence="3">
    <location>
        <position position="653"/>
    </location>
</feature>
<feature type="modified residue" description="Phosphoserine" evidence="3">
    <location>
        <position position="656"/>
    </location>
</feature>
<feature type="modified residue" description="Phosphothreonine" evidence="3">
    <location>
        <position position="659"/>
    </location>
</feature>
<feature type="modified residue" description="Phosphoserine" evidence="3">
    <location>
        <position position="852"/>
    </location>
</feature>
<feature type="cross-link" description="Glycyl lysine isopeptide (Lys-Gly) (interchain with G-Cter in SUMO2)" evidence="3">
    <location>
        <position position="57"/>
    </location>
</feature>
<feature type="cross-link" description="Glycyl lysine isopeptide (Lys-Gly) (interchain with G-Cter in SUMO2)" evidence="3">
    <location>
        <position position="798"/>
    </location>
</feature>
<dbReference type="EMBL" id="AB193105">
    <property type="protein sequence ID" value="BAD91666.1"/>
    <property type="molecule type" value="Genomic_DNA"/>
</dbReference>
<dbReference type="RefSeq" id="NP_001164613.1">
    <property type="nucleotide sequence ID" value="NM_001171142.1"/>
</dbReference>
<dbReference type="SMR" id="Q59I72"/>
<dbReference type="CORUM" id="Q59I72"/>
<dbReference type="FunCoup" id="Q59I72">
    <property type="interactions" value="1192"/>
</dbReference>
<dbReference type="STRING" id="9986.ENSOCUP00000006694"/>
<dbReference type="PaxDb" id="9986-ENSOCUP00000006694"/>
<dbReference type="GeneID" id="100328952"/>
<dbReference type="KEGG" id="ocu:100328952"/>
<dbReference type="CTD" id="1495"/>
<dbReference type="eggNOG" id="KOG3681">
    <property type="taxonomic scope" value="Eukaryota"/>
</dbReference>
<dbReference type="InParanoid" id="Q59I72"/>
<dbReference type="OrthoDB" id="6376697at2759"/>
<dbReference type="Proteomes" id="UP000001811">
    <property type="component" value="Unplaced"/>
</dbReference>
<dbReference type="GO" id="GO:0015629">
    <property type="term" value="C:actin cytoskeleton"/>
    <property type="evidence" value="ECO:0007669"/>
    <property type="project" value="InterPro"/>
</dbReference>
<dbReference type="GO" id="GO:0005912">
    <property type="term" value="C:adherens junction"/>
    <property type="evidence" value="ECO:0007669"/>
    <property type="project" value="UniProtKB-SubCell"/>
</dbReference>
<dbReference type="GO" id="GO:0016342">
    <property type="term" value="C:catenin complex"/>
    <property type="evidence" value="ECO:0007669"/>
    <property type="project" value="TreeGrafter"/>
</dbReference>
<dbReference type="GO" id="GO:0005737">
    <property type="term" value="C:cytoplasm"/>
    <property type="evidence" value="ECO:0007669"/>
    <property type="project" value="UniProtKB-SubCell"/>
</dbReference>
<dbReference type="GO" id="GO:0005634">
    <property type="term" value="C:nucleus"/>
    <property type="evidence" value="ECO:0007669"/>
    <property type="project" value="UniProtKB-SubCell"/>
</dbReference>
<dbReference type="GO" id="GO:0051015">
    <property type="term" value="F:actin filament binding"/>
    <property type="evidence" value="ECO:0007669"/>
    <property type="project" value="InterPro"/>
</dbReference>
<dbReference type="GO" id="GO:0008013">
    <property type="term" value="F:beta-catenin binding"/>
    <property type="evidence" value="ECO:0007669"/>
    <property type="project" value="TreeGrafter"/>
</dbReference>
<dbReference type="GO" id="GO:0045296">
    <property type="term" value="F:cadherin binding"/>
    <property type="evidence" value="ECO:0007669"/>
    <property type="project" value="InterPro"/>
</dbReference>
<dbReference type="GO" id="GO:0005198">
    <property type="term" value="F:structural molecule activity"/>
    <property type="evidence" value="ECO:0007669"/>
    <property type="project" value="InterPro"/>
</dbReference>
<dbReference type="GO" id="GO:0016477">
    <property type="term" value="P:cell migration"/>
    <property type="evidence" value="ECO:0007669"/>
    <property type="project" value="TreeGrafter"/>
</dbReference>
<dbReference type="GO" id="GO:0098609">
    <property type="term" value="P:cell-cell adhesion"/>
    <property type="evidence" value="ECO:0007669"/>
    <property type="project" value="TreeGrafter"/>
</dbReference>
<dbReference type="GO" id="GO:1900181">
    <property type="term" value="P:negative regulation of protein localization to nucleus"/>
    <property type="evidence" value="ECO:0000250"/>
    <property type="project" value="UniProtKB"/>
</dbReference>
<dbReference type="FunFam" id="1.20.120.230:FF:000006">
    <property type="entry name" value="Catenin alpha 1"/>
    <property type="match status" value="1"/>
</dbReference>
<dbReference type="FunFam" id="1.20.120.230:FF:000007">
    <property type="entry name" value="Catenin alpha 1"/>
    <property type="match status" value="1"/>
</dbReference>
<dbReference type="FunFam" id="1.20.120.230:FF:000008">
    <property type="entry name" value="Catenin alpha 1"/>
    <property type="match status" value="1"/>
</dbReference>
<dbReference type="FunFam" id="1.20.120.230:FF:000011">
    <property type="entry name" value="Catenin alpha 1"/>
    <property type="match status" value="1"/>
</dbReference>
<dbReference type="FunFam" id="1.20.120.230:FF:000012">
    <property type="entry name" value="Catenin alpha-2 isoform 1"/>
    <property type="match status" value="1"/>
</dbReference>
<dbReference type="Gene3D" id="6.10.250.2510">
    <property type="match status" value="1"/>
</dbReference>
<dbReference type="Gene3D" id="1.20.120.230">
    <property type="entry name" value="Alpha-catenin/vinculin-like"/>
    <property type="match status" value="5"/>
</dbReference>
<dbReference type="InterPro" id="IPR036723">
    <property type="entry name" value="Alpha-catenin/vinculin-like_sf"/>
</dbReference>
<dbReference type="InterPro" id="IPR001033">
    <property type="entry name" value="Alpha_catenin"/>
</dbReference>
<dbReference type="InterPro" id="IPR006077">
    <property type="entry name" value="Vinculin/catenin"/>
</dbReference>
<dbReference type="InterPro" id="IPR000633">
    <property type="entry name" value="Vinculin_CS"/>
</dbReference>
<dbReference type="PANTHER" id="PTHR18914">
    <property type="entry name" value="ALPHA CATENIN"/>
    <property type="match status" value="1"/>
</dbReference>
<dbReference type="PANTHER" id="PTHR18914:SF24">
    <property type="entry name" value="CATENIN ALPHA-1"/>
    <property type="match status" value="1"/>
</dbReference>
<dbReference type="Pfam" id="PF01044">
    <property type="entry name" value="Vinculin"/>
    <property type="match status" value="1"/>
</dbReference>
<dbReference type="PRINTS" id="PR00805">
    <property type="entry name" value="ALPHACATENIN"/>
</dbReference>
<dbReference type="SUPFAM" id="SSF47220">
    <property type="entry name" value="alpha-catenin/vinculin-like"/>
    <property type="match status" value="4"/>
</dbReference>
<dbReference type="PROSITE" id="PS00663">
    <property type="entry name" value="VINCULIN_1"/>
    <property type="match status" value="1"/>
</dbReference>
<accession>Q59I72</accession>
<organism>
    <name type="scientific">Oryctolagus cuniculus</name>
    <name type="common">Rabbit</name>
    <dbReference type="NCBI Taxonomy" id="9986"/>
    <lineage>
        <taxon>Eukaryota</taxon>
        <taxon>Metazoa</taxon>
        <taxon>Chordata</taxon>
        <taxon>Craniata</taxon>
        <taxon>Vertebrata</taxon>
        <taxon>Euteleostomi</taxon>
        <taxon>Mammalia</taxon>
        <taxon>Eutheria</taxon>
        <taxon>Euarchontoglires</taxon>
        <taxon>Glires</taxon>
        <taxon>Lagomorpha</taxon>
        <taxon>Leporidae</taxon>
        <taxon>Oryctolagus</taxon>
    </lineage>
</organism>
<sequence length="907" mass="100173">MTAVHAGNINFKWDPKSLEIRTLAVERLLEPLVTQVTTLVNTNSKGPSNKKRGRSKKAHVLAASVEQATENFLDKGDKIAKESQFLKEELVAAVEDVRKQGDLMKSAAGEFADDPCSSVKRGNMVRAARALLSAVTRLLILADMADVYKLLVQLKVVEDGILKLRNAGNEQDLGIQYKALKPEVDKLNIMAAKRQQELKDVGHRDQMAAARGILQKNVPILYTASQACLQHPDVAAYKANRDLIYKQLQQAVNGISNAAQATTSDDASQHPGGSGGGELAYALNDFDKQIIVDPLSFSEERFRPSLEERLESIISGAALMADSSCTRDDRRERIVAECNAVRQALQDLLSEYMGNAGRKERSDALNSAIDKMTKKTRDLRRQLRKAVMDHVSDSFLETNVPLLVLIEAAKNGNEKEVKEYAQVFREHANKLIEVANLACSISNNEEGVKLVRMSASQLEALCPQVINAALALAAKPQSKLAQENMDLFKEQWEKQVRVLTDAVDDITSIDDFLAVSENHILEDVNKCVIALQEKDVDGLDRTAGAIRGRAARVIHVVTSEMDNYEPGVYTEKVLEATKLLSNTVMPRFTEQVEAAVEALSSDPAQPMDENEFIDASRLVYDGIRDIRKAVLMIRTPEELDDSDFETEDFDVRSRTSVQTEDDQLIAGQSARAIMAQLPQEQKAKIAEQVASFQEEKSKLDAEVSKWDDSGNDIIVLAKQMCMIMMEMTDFTRGKGPLKNTSDVISAAKKIAEAGSRMDKLGRTIADHCPDSACKQDLLAYLQRIALYCHQLNICSKVKAEVQNLGGELVVSGVDSAMSLIQAAKNLMNAVVQTVKASYVASTKYQKSQGMASLNLPAVSWKMKAPEKKPLVKREKQDETQTKIKRASQKKHVNPVQALSEFKAMDSI</sequence>
<name>CTNA1_RABIT</name>
<comment type="function">
    <text evidence="1 2">Associates with the cytoplasmic domain of a variety of cadherins. The association of catenins to cadherins produces a complex which is linked to the actin filament network, and which seems to be of primary importance for cadherins cell-adhesion properties. Can associate with both E- and N-cadherins. Originally believed to be a stable component of E-cadherin/catenin adhesion complexes and to mediate the linkage of cadherins to the actin cytoskeleton at adherens junctions. In contrast, cortical actin was found to be much more dynamic than E-cadherin/catenin complexes and CTNNA1 was shown not to bind to F-actin when assembled in the complex suggesting a different linkage between actin and adherens junctions components. The homodimeric form may regulate actin filament assembly and inhibit actin branching by competing with the Arp2/3 complex for binding to actin filaments. Involved in the regulation of WWTR1/TAZ, YAP1 and TGFB1-dependent SMAD2 and SMAD3 nuclear accumulation (By similarity). May play a crucial role in cell differentiation (By similarity).</text>
</comment>
<comment type="subunit">
    <text evidence="2 3">Monomer and homodimer; the monomer preferentially binds to CTNNB1 and the homodimer to actin (By similarity). Component of an cadherin:catenin adhesion complex composed of at least of CDH26, beta-catenin/CTNNB1, alpha-catenin/CTNNA1 and p120 catenin/CTNND1 (By similarity). Possible component of an E-cadherin/ catenin adhesion complex together with E-cadherin/CDH1 and beta-catenin/CTNNB1 or gamma-catenin/JUP; the complex is located to adherens junctions (By similarity). The stable association of CTNNA1 is controversial as CTNNA1 was shown not to bind to F-actin when assembled in the complex (By similarity). Alternatively, the CTNNA1-containing complex may be linked to F-actin by other proteins such as LIMA1 (By similarity). Binds AFDN and F-actin (By similarity). Interacts with ARHGAP21 (By similarity). Interacts with AJUBA (By similarity). Interacts with LIMA1 (By similarity). Interacts with vinculin/VCL (By similarity). Interacts with TJP2/ZO2 (via N-terminus) (By similarity). Interacts with TJP1/ZO1 (via N-terminus) (By similarity).</text>
</comment>
<comment type="subcellular location">
    <subcellularLocation>
        <location evidence="2">Cytoplasm</location>
        <location evidence="2">Cytoskeleton</location>
    </subcellularLocation>
    <subcellularLocation>
        <location evidence="3">Cell junction</location>
        <location evidence="3">Adherens junction</location>
    </subcellularLocation>
    <subcellularLocation>
        <location evidence="2">Cell membrane</location>
        <topology evidence="6">Peripheral membrane protein</topology>
        <orientation evidence="2">Cytoplasmic side</orientation>
    </subcellularLocation>
    <subcellularLocation>
        <location evidence="2">Cell junction</location>
    </subcellularLocation>
    <subcellularLocation>
        <location evidence="4">Cytoplasm</location>
    </subcellularLocation>
    <subcellularLocation>
        <location evidence="3">Nucleus</location>
    </subcellularLocation>
    <text evidence="2">Found at cell-cell boundaries and probably at cell-matrix boundaries.</text>
</comment>
<comment type="PTM">
    <text evidence="3">Sumoylated.</text>
</comment>
<comment type="PTM">
    <text evidence="2">Phosphorylation seems to contribute to the strength of cell-cell adhesion rather than to the basic capacity for cell-cell adhesion.</text>
</comment>
<comment type="similarity">
    <text evidence="6">Belongs to the vinculin/alpha-catenin family.</text>
</comment>